<accession>Q5HTJ5</accession>
<dbReference type="EC" id="2.1.1.61" evidence="1"/>
<dbReference type="EC" id="1.5.-.-" evidence="1"/>
<dbReference type="EMBL" id="CP000025">
    <property type="protein sequence ID" value="AAW35723.1"/>
    <property type="molecule type" value="Genomic_DNA"/>
</dbReference>
<dbReference type="RefSeq" id="WP_002867346.1">
    <property type="nucleotide sequence ID" value="NC_003912.7"/>
</dbReference>
<dbReference type="SMR" id="Q5HTJ5"/>
<dbReference type="DNASU" id="3231910"/>
<dbReference type="KEGG" id="cjr:CJE1404"/>
<dbReference type="HOGENOM" id="CLU_022427_2_1_7"/>
<dbReference type="GO" id="GO:0005737">
    <property type="term" value="C:cytoplasm"/>
    <property type="evidence" value="ECO:0007669"/>
    <property type="project" value="UniProtKB-SubCell"/>
</dbReference>
<dbReference type="GO" id="GO:0016645">
    <property type="term" value="F:oxidoreductase activity, acting on the CH-NH group of donors"/>
    <property type="evidence" value="ECO:0007669"/>
    <property type="project" value="InterPro"/>
</dbReference>
<dbReference type="GO" id="GO:0004808">
    <property type="term" value="F:tRNA (5-methylaminomethyl-2-thiouridylate)(34)-methyltransferase activity"/>
    <property type="evidence" value="ECO:0007669"/>
    <property type="project" value="UniProtKB-EC"/>
</dbReference>
<dbReference type="GO" id="GO:0032259">
    <property type="term" value="P:methylation"/>
    <property type="evidence" value="ECO:0007669"/>
    <property type="project" value="UniProtKB-KW"/>
</dbReference>
<dbReference type="GO" id="GO:0008033">
    <property type="term" value="P:tRNA processing"/>
    <property type="evidence" value="ECO:0007669"/>
    <property type="project" value="UniProtKB-KW"/>
</dbReference>
<dbReference type="Gene3D" id="3.30.9.10">
    <property type="entry name" value="D-Amino Acid Oxidase, subunit A, domain 2"/>
    <property type="match status" value="1"/>
</dbReference>
<dbReference type="Gene3D" id="3.50.50.60">
    <property type="entry name" value="FAD/NAD(P)-binding domain"/>
    <property type="match status" value="1"/>
</dbReference>
<dbReference type="Gene3D" id="3.40.50.150">
    <property type="entry name" value="Vaccinia Virus protein VP39"/>
    <property type="match status" value="1"/>
</dbReference>
<dbReference type="HAMAP" id="MF_01102">
    <property type="entry name" value="MnmC"/>
    <property type="match status" value="1"/>
</dbReference>
<dbReference type="InterPro" id="IPR006076">
    <property type="entry name" value="FAD-dep_OxRdtase"/>
</dbReference>
<dbReference type="InterPro" id="IPR036188">
    <property type="entry name" value="FAD/NAD-bd_sf"/>
</dbReference>
<dbReference type="InterPro" id="IPR008471">
    <property type="entry name" value="MnmC-like_methylTransf"/>
</dbReference>
<dbReference type="InterPro" id="IPR029063">
    <property type="entry name" value="SAM-dependent_MTases_sf"/>
</dbReference>
<dbReference type="InterPro" id="IPR023032">
    <property type="entry name" value="tRNA_MAMT_biosynth_bifunc_MnmC"/>
</dbReference>
<dbReference type="InterPro" id="IPR047785">
    <property type="entry name" value="tRNA_MNMC2"/>
</dbReference>
<dbReference type="InterPro" id="IPR017610">
    <property type="entry name" value="tRNA_S-uridine_synth_MnmC_C"/>
</dbReference>
<dbReference type="NCBIfam" id="TIGR03197">
    <property type="entry name" value="MnmC_Cterm"/>
    <property type="match status" value="1"/>
</dbReference>
<dbReference type="NCBIfam" id="NF002481">
    <property type="entry name" value="PRK01747.1-2"/>
    <property type="match status" value="1"/>
</dbReference>
<dbReference type="NCBIfam" id="NF033855">
    <property type="entry name" value="tRNA_MNMC2"/>
    <property type="match status" value="1"/>
</dbReference>
<dbReference type="PANTHER" id="PTHR13847">
    <property type="entry name" value="SARCOSINE DEHYDROGENASE-RELATED"/>
    <property type="match status" value="1"/>
</dbReference>
<dbReference type="PANTHER" id="PTHR13847:SF283">
    <property type="entry name" value="TRNA 5-METHYLAMINOMETHYL-2-THIOURIDINE BIOSYNTHESIS BIFUNCTIONAL PROTEIN MNMC"/>
    <property type="match status" value="1"/>
</dbReference>
<dbReference type="Pfam" id="PF01266">
    <property type="entry name" value="DAO"/>
    <property type="match status" value="1"/>
</dbReference>
<dbReference type="Pfam" id="PF05430">
    <property type="entry name" value="Methyltransf_30"/>
    <property type="match status" value="1"/>
</dbReference>
<dbReference type="SUPFAM" id="SSF51905">
    <property type="entry name" value="FAD/NAD(P)-binding domain"/>
    <property type="match status" value="1"/>
</dbReference>
<proteinExistence type="inferred from homology"/>
<keyword id="KW-0963">Cytoplasm</keyword>
<keyword id="KW-0274">FAD</keyword>
<keyword id="KW-0285">Flavoprotein</keyword>
<keyword id="KW-0489">Methyltransferase</keyword>
<keyword id="KW-0511">Multifunctional enzyme</keyword>
<keyword id="KW-0560">Oxidoreductase</keyword>
<keyword id="KW-0949">S-adenosyl-L-methionine</keyword>
<keyword id="KW-0808">Transferase</keyword>
<keyword id="KW-0819">tRNA processing</keyword>
<sequence>MKKAKLIFKDNTPFSLDFDDFYFNSKDGLNESKFVYTHSFEWKNQENFIIAESGFGIGLNFFLTLKRLLETTPSKRPKKLFYISVEAFYIEKEQLREIYQKLEFYEEFKELLEQFLKFYPKAKEGIYRFYFEDCFLDLVFEDIAVLKELDFKADVWYLDGFSPNKNLQMFDENLIFEVARLSKKNTQICTFSSASFLQKNLKKYGFRVEKTKGFRKREMIKAYLENELEFKDKEAYFSRTFSSLKNKKVAIIGAGISSAVLAYELSLRGFEIDVFEKYLELGKGASGNESGILSSLILKPKVNLGEFSELSFIEASRFYRQILDLEFKGVVEFAHNDLMQERFDTQRENVLFKISKNQAFLEEGGVIFPKNLVKNLFEKSKACIYFNHEFQAYKFKNECFTLKFKNDIVKSDYAVLIYAMGADTKDFVFYDEMKLSKVRGQVTHLKPFLDTPFPLSSKAYICPVKDDLQVIGASYDRLNASLESKEEDDKQNIENIAEFIDKNTKLEIIGSKVGFRSYSSDRFMIVGNAYDEVFYKEEYKALLWTKNKEQKPAKMSCNLYFNFAHGSRGFSTSVLAARYLCALINNEPLCLEKKYIHAIHPARFLIRKLKKGL</sequence>
<organism>
    <name type="scientific">Campylobacter jejuni (strain RM1221)</name>
    <dbReference type="NCBI Taxonomy" id="195099"/>
    <lineage>
        <taxon>Bacteria</taxon>
        <taxon>Pseudomonadati</taxon>
        <taxon>Campylobacterota</taxon>
        <taxon>Epsilonproteobacteria</taxon>
        <taxon>Campylobacterales</taxon>
        <taxon>Campylobacteraceae</taxon>
        <taxon>Campylobacter</taxon>
    </lineage>
</organism>
<name>MNMC_CAMJR</name>
<comment type="function">
    <text evidence="1">Catalyzes the last two steps in the biosynthesis of 5-methylaminomethyl-2-thiouridine (mnm(5)s(2)U) at the wobble position (U34) in tRNA. Catalyzes the FAD-dependent demodification of cmnm(5)s(2)U34 to nm(5)s(2)U34, followed by the transfer of a methyl group from S-adenosyl-L-methionine to nm(5)s(2)U34, to form mnm(5)s(2)U34.</text>
</comment>
<comment type="catalytic activity">
    <reaction evidence="1">
        <text>5-aminomethyl-2-thiouridine(34) in tRNA + S-adenosyl-L-methionine = 5-methylaminomethyl-2-thiouridine(34) in tRNA + S-adenosyl-L-homocysteine + H(+)</text>
        <dbReference type="Rhea" id="RHEA:19569"/>
        <dbReference type="Rhea" id="RHEA-COMP:10195"/>
        <dbReference type="Rhea" id="RHEA-COMP:10197"/>
        <dbReference type="ChEBI" id="CHEBI:15378"/>
        <dbReference type="ChEBI" id="CHEBI:57856"/>
        <dbReference type="ChEBI" id="CHEBI:59789"/>
        <dbReference type="ChEBI" id="CHEBI:74454"/>
        <dbReference type="ChEBI" id="CHEBI:74455"/>
        <dbReference type="EC" id="2.1.1.61"/>
    </reaction>
</comment>
<comment type="cofactor">
    <cofactor evidence="1">
        <name>FAD</name>
        <dbReference type="ChEBI" id="CHEBI:57692"/>
    </cofactor>
</comment>
<comment type="subcellular location">
    <subcellularLocation>
        <location evidence="1">Cytoplasm</location>
    </subcellularLocation>
</comment>
<comment type="similarity">
    <text evidence="1">In the N-terminal section; belongs to the methyltransferase superfamily. tRNA (mnm(5)s(2)U34)-methyltransferase family.</text>
</comment>
<comment type="similarity">
    <text evidence="1">In the C-terminal section; belongs to the DAO family.</text>
</comment>
<reference key="1">
    <citation type="journal article" date="2005" name="PLoS Biol.">
        <title>Major structural differences and novel potential virulence mechanisms from the genomes of multiple Campylobacter species.</title>
        <authorList>
            <person name="Fouts D.E."/>
            <person name="Mongodin E.F."/>
            <person name="Mandrell R.E."/>
            <person name="Miller W.G."/>
            <person name="Rasko D.A."/>
            <person name="Ravel J."/>
            <person name="Brinkac L.M."/>
            <person name="DeBoy R.T."/>
            <person name="Parker C.T."/>
            <person name="Daugherty S.C."/>
            <person name="Dodson R.J."/>
            <person name="Durkin A.S."/>
            <person name="Madupu R."/>
            <person name="Sullivan S.A."/>
            <person name="Shetty J.U."/>
            <person name="Ayodeji M.A."/>
            <person name="Shvartsbeyn A."/>
            <person name="Schatz M.C."/>
            <person name="Badger J.H."/>
            <person name="Fraser C.M."/>
            <person name="Nelson K.E."/>
        </authorList>
    </citation>
    <scope>NUCLEOTIDE SEQUENCE [LARGE SCALE GENOMIC DNA]</scope>
    <source>
        <strain>RM1221</strain>
    </source>
</reference>
<feature type="chain" id="PRO_0000347970" description="tRNA 5-methylaminomethyl-2-thiouridine biosynthesis bifunctional protein MnmC">
    <location>
        <begin position="1"/>
        <end position="613"/>
    </location>
</feature>
<feature type="region of interest" description="tRNA (mnm(5)s(2)U34)-methyltransferase">
    <location>
        <begin position="1"/>
        <end position="225"/>
    </location>
</feature>
<feature type="region of interest" description="FAD-dependent cmnm(5)s(2)U34 oxidoreductase">
    <location>
        <begin position="252"/>
        <end position="613"/>
    </location>
</feature>
<protein>
    <recommendedName>
        <fullName evidence="1">tRNA 5-methylaminomethyl-2-thiouridine biosynthesis bifunctional protein MnmC</fullName>
        <shortName evidence="1">tRNA mnm(5)s(2)U biosynthesis bifunctional protein</shortName>
    </recommendedName>
    <domain>
        <recommendedName>
            <fullName evidence="1">tRNA (mnm(5)s(2)U34)-methyltransferase</fullName>
            <ecNumber evidence="1">2.1.1.61</ecNumber>
        </recommendedName>
    </domain>
    <domain>
        <recommendedName>
            <fullName evidence="1">FAD-dependent cmnm(5)s(2)U34 oxidoreductase</fullName>
            <ecNumber evidence="1">1.5.-.-</ecNumber>
        </recommendedName>
    </domain>
</protein>
<evidence type="ECO:0000255" key="1">
    <source>
        <dbReference type="HAMAP-Rule" id="MF_01102"/>
    </source>
</evidence>
<gene>
    <name evidence="1" type="primary">mnmC</name>
    <name type="ordered locus">CJE1404</name>
</gene>